<organism>
    <name type="scientific">Arabidopsis thaliana</name>
    <name type="common">Mouse-ear cress</name>
    <dbReference type="NCBI Taxonomy" id="3702"/>
    <lineage>
        <taxon>Eukaryota</taxon>
        <taxon>Viridiplantae</taxon>
        <taxon>Streptophyta</taxon>
        <taxon>Embryophyta</taxon>
        <taxon>Tracheophyta</taxon>
        <taxon>Spermatophyta</taxon>
        <taxon>Magnoliopsida</taxon>
        <taxon>eudicotyledons</taxon>
        <taxon>Gunneridae</taxon>
        <taxon>Pentapetalae</taxon>
        <taxon>rosids</taxon>
        <taxon>malvids</taxon>
        <taxon>Brassicales</taxon>
        <taxon>Brassicaceae</taxon>
        <taxon>Camelineae</taxon>
        <taxon>Arabidopsis</taxon>
    </lineage>
</organism>
<name>EPF2_ARATH</name>
<sequence>MTKFVRKYMFCLVLVFAACSLVVNSIRTPPLKNTVNGGEKKNADIEQAQTHHKKEISKNGGVEMEMYPTGSSLPDCSYACGACSPCKRVMISFECSVAESCSVIYRCTCRGRYYHVPSRA</sequence>
<keyword id="KW-0002">3D-structure</keyword>
<keyword id="KW-0217">Developmental protein</keyword>
<keyword id="KW-1015">Disulfide bond</keyword>
<keyword id="KW-1185">Reference proteome</keyword>
<keyword id="KW-0964">Secreted</keyword>
<keyword id="KW-0732">Signal</keyword>
<proteinExistence type="evidence at protein level"/>
<evidence type="ECO:0000255" key="1"/>
<evidence type="ECO:0000269" key="2">
    <source>
    </source>
</evidence>
<evidence type="ECO:0000269" key="3">
    <source>
    </source>
</evidence>
<evidence type="ECO:0000269" key="4">
    <source>
    </source>
</evidence>
<evidence type="ECO:0000269" key="5">
    <source>
    </source>
</evidence>
<evidence type="ECO:0000269" key="6">
    <source>
    </source>
</evidence>
<evidence type="ECO:0000303" key="7">
    <source>
    </source>
</evidence>
<evidence type="ECO:0000303" key="8">
    <source>
    </source>
</evidence>
<evidence type="ECO:0000303" key="9">
    <source>
    </source>
</evidence>
<evidence type="ECO:0000305" key="10"/>
<evidence type="ECO:0000312" key="11">
    <source>
        <dbReference type="Araport" id="AT1G34245"/>
    </source>
</evidence>
<evidence type="ECO:0007829" key="12">
    <source>
        <dbReference type="PDB" id="5XKJ"/>
    </source>
</evidence>
<dbReference type="EMBL" id="AB499311">
    <property type="protein sequence ID" value="BAH58781.1"/>
    <property type="molecule type" value="mRNA"/>
</dbReference>
<dbReference type="EMBL" id="AC007454">
    <property type="status" value="NOT_ANNOTATED_CDS"/>
    <property type="molecule type" value="Genomic_DNA"/>
</dbReference>
<dbReference type="EMBL" id="CP002684">
    <property type="protein sequence ID" value="AEE31689.1"/>
    <property type="molecule type" value="Genomic_DNA"/>
</dbReference>
<dbReference type="EMBL" id="AY086790">
    <property type="protein sequence ID" value="AAM63840.1"/>
    <property type="molecule type" value="mRNA"/>
</dbReference>
<dbReference type="RefSeq" id="NP_564442.1">
    <property type="nucleotide sequence ID" value="NM_103147.3"/>
</dbReference>
<dbReference type="PDB" id="5XKJ">
    <property type="method" value="X-ray"/>
    <property type="resolution" value="3.48 A"/>
    <property type="chains" value="E/F=69-120"/>
</dbReference>
<dbReference type="PDBsum" id="5XKJ"/>
<dbReference type="SMR" id="Q8LC53"/>
<dbReference type="BioGRID" id="25556">
    <property type="interactions" value="3"/>
</dbReference>
<dbReference type="FunCoup" id="Q8LC53">
    <property type="interactions" value="154"/>
</dbReference>
<dbReference type="STRING" id="3702.Q8LC53"/>
<dbReference type="iPTMnet" id="Q8LC53"/>
<dbReference type="PaxDb" id="3702-AT1G34245.1"/>
<dbReference type="EnsemblPlants" id="AT1G34245.1">
    <property type="protein sequence ID" value="AT1G34245.1"/>
    <property type="gene ID" value="AT1G34245"/>
</dbReference>
<dbReference type="GeneID" id="840324"/>
<dbReference type="Gramene" id="AT1G34245.1">
    <property type="protein sequence ID" value="AT1G34245.1"/>
    <property type="gene ID" value="AT1G34245"/>
</dbReference>
<dbReference type="KEGG" id="ath:AT1G34245"/>
<dbReference type="Araport" id="AT1G34245"/>
<dbReference type="TAIR" id="AT1G34245">
    <property type="gene designation" value="EPF2"/>
</dbReference>
<dbReference type="eggNOG" id="ENOG502S55W">
    <property type="taxonomic scope" value="Eukaryota"/>
</dbReference>
<dbReference type="HOGENOM" id="CLU_135272_1_0_1"/>
<dbReference type="InParanoid" id="Q8LC53"/>
<dbReference type="OMA" id="VIYRCTC"/>
<dbReference type="PhylomeDB" id="Q8LC53"/>
<dbReference type="PRO" id="PR:Q8LC53"/>
<dbReference type="Proteomes" id="UP000006548">
    <property type="component" value="Chromosome 1"/>
</dbReference>
<dbReference type="ExpressionAtlas" id="Q8LC53">
    <property type="expression patterns" value="baseline and differential"/>
</dbReference>
<dbReference type="GO" id="GO:0005576">
    <property type="term" value="C:extracellular region"/>
    <property type="evidence" value="ECO:0007669"/>
    <property type="project" value="UniProtKB-SubCell"/>
</dbReference>
<dbReference type="GO" id="GO:0019901">
    <property type="term" value="F:protein kinase binding"/>
    <property type="evidence" value="ECO:0000353"/>
    <property type="project" value="TAIR"/>
</dbReference>
<dbReference type="GO" id="GO:0010052">
    <property type="term" value="P:guard cell differentiation"/>
    <property type="evidence" value="ECO:0000315"/>
    <property type="project" value="TAIR"/>
</dbReference>
<dbReference type="GO" id="GO:2000122">
    <property type="term" value="P:negative regulation of stomatal complex development"/>
    <property type="evidence" value="ECO:0000315"/>
    <property type="project" value="TAIR"/>
</dbReference>
<dbReference type="GO" id="GO:0090626">
    <property type="term" value="P:plant epidermis morphogenesis"/>
    <property type="evidence" value="ECO:0000315"/>
    <property type="project" value="TAIR"/>
</dbReference>
<dbReference type="GO" id="GO:0010374">
    <property type="term" value="P:stomatal complex development"/>
    <property type="evidence" value="ECO:0000315"/>
    <property type="project" value="TAIR"/>
</dbReference>
<dbReference type="InterPro" id="IPR039455">
    <property type="entry name" value="EPFL"/>
</dbReference>
<dbReference type="PANTHER" id="PTHR33109">
    <property type="entry name" value="EPIDERMAL PATTERNING FACTOR-LIKE PROTEIN 4"/>
    <property type="match status" value="1"/>
</dbReference>
<dbReference type="PANTHER" id="PTHR33109:SF6">
    <property type="entry name" value="EPIDERMAL PATTERNING FACTOR-LIKE PROTEIN 7-RELATED"/>
    <property type="match status" value="1"/>
</dbReference>
<dbReference type="Pfam" id="PF17181">
    <property type="entry name" value="EPF"/>
    <property type="match status" value="1"/>
</dbReference>
<gene>
    <name evidence="7" type="primary">EPF2</name>
    <name evidence="11" type="ordered locus">At1g34245</name>
    <name type="ORF">F23M19</name>
</gene>
<feature type="signal peptide" evidence="1">
    <location>
        <begin position="1"/>
        <end position="25"/>
    </location>
</feature>
<feature type="chain" id="PRO_0000392498" description="Protein EPIDERMAL PATTERNING FACTOR 2" evidence="1">
    <location>
        <begin position="26"/>
        <end position="120"/>
    </location>
</feature>
<feature type="chain" id="PRO_0000430506" description="MEPF2" evidence="8">
    <location>
        <begin position="69"/>
        <end position="120"/>
    </location>
</feature>
<feature type="disulfide bond" evidence="8">
    <location>
        <begin position="76"/>
        <end position="107"/>
    </location>
</feature>
<feature type="disulfide bond" evidence="8">
    <location>
        <begin position="80"/>
        <end position="86"/>
    </location>
</feature>
<feature type="disulfide bond" evidence="8">
    <location>
        <begin position="83"/>
        <end position="109"/>
    </location>
</feature>
<feature type="disulfide bond" evidence="4">
    <location>
        <begin position="95"/>
        <end position="101"/>
    </location>
</feature>
<feature type="mutagenesis site" description="Loss of cleavage by CRSP." evidence="6">
    <original>TGSSLPDCSYAC</original>
    <variation>IGSTAPTCTYNE</variation>
    <location>
        <begin position="69"/>
        <end position="80"/>
    </location>
</feature>
<feature type="strand" evidence="12">
    <location>
        <begin position="77"/>
        <end position="84"/>
    </location>
</feature>
<feature type="strand" evidence="12">
    <location>
        <begin position="87"/>
        <end position="92"/>
    </location>
</feature>
<feature type="strand" evidence="12">
    <location>
        <begin position="103"/>
        <end position="113"/>
    </location>
</feature>
<comment type="function">
    <text evidence="2 3 5 6 8">Controls stomatal patterning. Regulates the number of cells that enter, and remain in, the stomatal lineage by inhibiting protodermal cells from adopting the meristemoid mother cell (MMC) fate in a non-cell-autonomous manner. Mediates stomatal development inhibition. MEPF2: mobile signal controlling stomatal development in a non-cell-autonomous manner (PubMed:22241782). Uses ERECTA as major receptor (PubMed:22241782). Inactivated by cleavage by CRSP (AC Q9LNU1) (PubMed:25043023). May act by competing with somatogen (AC Q9SV72) for the same receptor, TMM (AC Q9SSD1) (PubMed:22027592).</text>
</comment>
<comment type="subunit">
    <text evidence="5">Interacts with ERECTA, ERL1 and TMM.</text>
</comment>
<comment type="subcellular location">
    <subcellularLocation>
        <location evidence="10">Secreted</location>
    </subcellularLocation>
</comment>
<comment type="tissue specificity">
    <text evidence="2 3">Expressed in leaves, especially by the MMCs and their early descendants cells (stomatal lineage cells) including guard mother cells (GMCs).</text>
</comment>
<comment type="induction">
    <text evidence="6">Induced by high CO(2).</text>
</comment>
<comment type="domain">
    <text evidence="4">The loop (92-105) connecting the two anti-parallel beta-strands (85-91 and 106-112) confers the function to the peptide.</text>
</comment>
<comment type="disruption phenotype">
    <text evidence="2 3 6">Increased small pavement cell (non-stomatal) and stomatal cell density. Inversion in CO(2) control of stomatal development resulting in an increased number of stomata at elevated CO(2) concentration.</text>
</comment>
<comment type="similarity">
    <text evidence="10">Belongs to the plant cysteine rich small secretory peptide family. Epidermal patterning factor subfamily.</text>
</comment>
<reference key="1">
    <citation type="journal article" date="2009" name="Plant Cell Physiol.">
        <title>Epidermal cell density is autoregulated via a secretory peptide, EPIDERMAL PATTERNING FACTOR 2 in Arabidopsis leaves.</title>
        <authorList>
            <person name="Hara K."/>
            <person name="Yokoo T."/>
            <person name="Kajita R."/>
            <person name="Onishi T."/>
            <person name="Yahata S."/>
            <person name="Peterson K.M."/>
            <person name="Torii K.U."/>
            <person name="Kakimoto T."/>
        </authorList>
    </citation>
    <scope>NUCLEOTIDE SEQUENCE [MRNA]</scope>
    <scope>FUNCTION</scope>
    <scope>TISSUE SPECIFICITY</scope>
    <scope>DISRUPTION PHENOTYPE</scope>
    <scope>GENE FAMILY</scope>
    <scope>NOMENCLATURE</scope>
</reference>
<reference key="2">
    <citation type="journal article" date="2000" name="Nature">
        <title>Sequence and analysis of chromosome 1 of the plant Arabidopsis thaliana.</title>
        <authorList>
            <person name="Theologis A."/>
            <person name="Ecker J.R."/>
            <person name="Palm C.J."/>
            <person name="Federspiel N.A."/>
            <person name="Kaul S."/>
            <person name="White O."/>
            <person name="Alonso J."/>
            <person name="Altafi H."/>
            <person name="Araujo R."/>
            <person name="Bowman C.L."/>
            <person name="Brooks S.Y."/>
            <person name="Buehler E."/>
            <person name="Chan A."/>
            <person name="Chao Q."/>
            <person name="Chen H."/>
            <person name="Cheuk R.F."/>
            <person name="Chin C.W."/>
            <person name="Chung M.K."/>
            <person name="Conn L."/>
            <person name="Conway A.B."/>
            <person name="Conway A.R."/>
            <person name="Creasy T.H."/>
            <person name="Dewar K."/>
            <person name="Dunn P."/>
            <person name="Etgu P."/>
            <person name="Feldblyum T.V."/>
            <person name="Feng J.-D."/>
            <person name="Fong B."/>
            <person name="Fujii C.Y."/>
            <person name="Gill J.E."/>
            <person name="Goldsmith A.D."/>
            <person name="Haas B."/>
            <person name="Hansen N.F."/>
            <person name="Hughes B."/>
            <person name="Huizar L."/>
            <person name="Hunter J.L."/>
            <person name="Jenkins J."/>
            <person name="Johnson-Hopson C."/>
            <person name="Khan S."/>
            <person name="Khaykin E."/>
            <person name="Kim C.J."/>
            <person name="Koo H.L."/>
            <person name="Kremenetskaia I."/>
            <person name="Kurtz D.B."/>
            <person name="Kwan A."/>
            <person name="Lam B."/>
            <person name="Langin-Hooper S."/>
            <person name="Lee A."/>
            <person name="Lee J.M."/>
            <person name="Lenz C.A."/>
            <person name="Li J.H."/>
            <person name="Li Y.-P."/>
            <person name="Lin X."/>
            <person name="Liu S.X."/>
            <person name="Liu Z.A."/>
            <person name="Luros J.S."/>
            <person name="Maiti R."/>
            <person name="Marziali A."/>
            <person name="Militscher J."/>
            <person name="Miranda M."/>
            <person name="Nguyen M."/>
            <person name="Nierman W.C."/>
            <person name="Osborne B.I."/>
            <person name="Pai G."/>
            <person name="Peterson J."/>
            <person name="Pham P.K."/>
            <person name="Rizzo M."/>
            <person name="Rooney T."/>
            <person name="Rowley D."/>
            <person name="Sakano H."/>
            <person name="Salzberg S.L."/>
            <person name="Schwartz J.R."/>
            <person name="Shinn P."/>
            <person name="Southwick A.M."/>
            <person name="Sun H."/>
            <person name="Tallon L.J."/>
            <person name="Tambunga G."/>
            <person name="Toriumi M.J."/>
            <person name="Town C.D."/>
            <person name="Utterback T."/>
            <person name="Van Aken S."/>
            <person name="Vaysberg M."/>
            <person name="Vysotskaia V.S."/>
            <person name="Walker M."/>
            <person name="Wu D."/>
            <person name="Yu G."/>
            <person name="Fraser C.M."/>
            <person name="Venter J.C."/>
            <person name="Davis R.W."/>
        </authorList>
    </citation>
    <scope>NUCLEOTIDE SEQUENCE [LARGE SCALE GENOMIC DNA]</scope>
    <source>
        <strain>cv. Columbia</strain>
    </source>
</reference>
<reference key="3">
    <citation type="journal article" date="2017" name="Plant J.">
        <title>Araport11: a complete reannotation of the Arabidopsis thaliana reference genome.</title>
        <authorList>
            <person name="Cheng C.Y."/>
            <person name="Krishnakumar V."/>
            <person name="Chan A.P."/>
            <person name="Thibaud-Nissen F."/>
            <person name="Schobel S."/>
            <person name="Town C.D."/>
        </authorList>
    </citation>
    <scope>GENOME REANNOTATION</scope>
    <source>
        <strain>cv. Columbia</strain>
    </source>
</reference>
<reference key="4">
    <citation type="submission" date="2002-03" db="EMBL/GenBank/DDBJ databases">
        <title>Full-length cDNA from Arabidopsis thaliana.</title>
        <authorList>
            <person name="Brover V.V."/>
            <person name="Troukhan M.E."/>
            <person name="Alexandrov N.A."/>
            <person name="Lu Y.-P."/>
            <person name="Flavell R.B."/>
            <person name="Feldmann K.A."/>
        </authorList>
    </citation>
    <scope>NUCLEOTIDE SEQUENCE [LARGE SCALE MRNA]</scope>
    <source>
        <strain>cv. Columbia</strain>
    </source>
</reference>
<reference key="5">
    <citation type="journal article" date="2009" name="Curr. Biol.">
        <title>The signaling peptide EPF2 controls asymmetric cell divisions during stomatal development.</title>
        <authorList>
            <person name="Hunt L."/>
            <person name="Gray J.E."/>
        </authorList>
    </citation>
    <scope>FUNCTION</scope>
    <scope>TISSUE SPECIFICITY</scope>
    <scope>DISRUPTION PHENOTYPE</scope>
</reference>
<reference key="6">
    <citation type="journal article" date="2011" name="Nat. Commun.">
        <title>The NMR structure of stomagen reveals the basis of stomatal density regulation by plant peptide hormones.</title>
        <authorList>
            <person name="Ohki S."/>
            <person name="Takeuchi M."/>
            <person name="Mori M."/>
        </authorList>
    </citation>
    <scope>FUNCTION</scope>
    <scope>3D-STRUCTURE MODELING</scope>
    <scope>DISULFIDE BOND</scope>
    <scope>DOMAIN</scope>
</reference>
<reference key="7">
    <citation type="journal article" date="2012" name="Genes Dev.">
        <title>Direct interaction of ligand-receptor pairs specifying stomatal patterning.</title>
        <authorList>
            <person name="Lee J.S."/>
            <person name="Kuroha T."/>
            <person name="Hnilova M."/>
            <person name="Khatayevich D."/>
            <person name="Kanaoka M.M."/>
            <person name="McAbee J.M."/>
            <person name="Sarikaya M."/>
            <person name="Tamerler C."/>
            <person name="Torii K.U."/>
        </authorList>
    </citation>
    <scope>FUNCTION</scope>
    <scope>INTERACTION WITH ERECTA; ERL1 AND TMM</scope>
</reference>
<reference key="8">
    <citation type="journal article" date="2014" name="Nature">
        <title>Carbonic anhydrases, EPF2 and a novel protease mediate CO2 control of stomatal development.</title>
        <authorList>
            <person name="Engineer C.B."/>
            <person name="Ghassemian M."/>
            <person name="Anderson J.C."/>
            <person name="Peck S.C."/>
            <person name="Hu H."/>
            <person name="Schroeder J.I."/>
        </authorList>
    </citation>
    <scope>INDUCTION BY CO(2)</scope>
    <scope>CLEAVAGE BY CRSP</scope>
    <scope>MUTAGENESIS OF 69-THR--CYS-80</scope>
    <scope>DISRUPTION PHENOTYPE</scope>
</reference>
<protein>
    <recommendedName>
        <fullName evidence="7">Protein EPIDERMAL PATTERNING FACTOR 2</fullName>
    </recommendedName>
    <component>
        <recommendedName>
            <fullName evidence="9">MEPF2</fullName>
        </recommendedName>
    </component>
</protein>
<accession>Q8LC53</accession>